<reference key="1">
    <citation type="journal article" date="2002" name="DNA Res.">
        <title>Complete genomic sequence of nitrogen-fixing symbiotic bacterium Bradyrhizobium japonicum USDA110.</title>
        <authorList>
            <person name="Kaneko T."/>
            <person name="Nakamura Y."/>
            <person name="Sato S."/>
            <person name="Minamisawa K."/>
            <person name="Uchiumi T."/>
            <person name="Sasamoto S."/>
            <person name="Watanabe A."/>
            <person name="Idesawa K."/>
            <person name="Iriguchi M."/>
            <person name="Kawashima K."/>
            <person name="Kohara M."/>
            <person name="Matsumoto M."/>
            <person name="Shimpo S."/>
            <person name="Tsuruoka H."/>
            <person name="Wada T."/>
            <person name="Yamada M."/>
            <person name="Tabata S."/>
        </authorList>
    </citation>
    <scope>NUCLEOTIDE SEQUENCE [LARGE SCALE GENOMIC DNA]</scope>
    <source>
        <strain>JCM 10833 / BCRC 13528 / IAM 13628 / NBRC 14792 / USDA 110</strain>
    </source>
</reference>
<accession>Q89WF2</accession>
<comment type="function">
    <text evidence="1">Catalyzes the transfer of the enolpyruvyl moiety of phosphoenolpyruvate (PEP) to the 5-hydroxyl of shikimate-3-phosphate (S3P) to produce enolpyruvyl shikimate-3-phosphate and inorganic phosphate.</text>
</comment>
<comment type="catalytic activity">
    <reaction evidence="1">
        <text>3-phosphoshikimate + phosphoenolpyruvate = 5-O-(1-carboxyvinyl)-3-phosphoshikimate + phosphate</text>
        <dbReference type="Rhea" id="RHEA:21256"/>
        <dbReference type="ChEBI" id="CHEBI:43474"/>
        <dbReference type="ChEBI" id="CHEBI:57701"/>
        <dbReference type="ChEBI" id="CHEBI:58702"/>
        <dbReference type="ChEBI" id="CHEBI:145989"/>
        <dbReference type="EC" id="2.5.1.19"/>
    </reaction>
    <physiologicalReaction direction="left-to-right" evidence="1">
        <dbReference type="Rhea" id="RHEA:21257"/>
    </physiologicalReaction>
</comment>
<comment type="pathway">
    <text evidence="1">Metabolic intermediate biosynthesis; chorismate biosynthesis; chorismate from D-erythrose 4-phosphate and phosphoenolpyruvate: step 6/7.</text>
</comment>
<comment type="subunit">
    <text evidence="1">Monomer.</text>
</comment>
<comment type="subcellular location">
    <subcellularLocation>
        <location evidence="1">Cytoplasm</location>
    </subcellularLocation>
</comment>
<comment type="similarity">
    <text evidence="1">Belongs to the EPSP synthase family.</text>
</comment>
<protein>
    <recommendedName>
        <fullName evidence="1">3-phosphoshikimate 1-carboxyvinyltransferase</fullName>
        <ecNumber evidence="1">2.5.1.19</ecNumber>
    </recommendedName>
    <alternativeName>
        <fullName evidence="1">5-enolpyruvylshikimate-3-phosphate synthase</fullName>
        <shortName evidence="1">EPSP synthase</shortName>
        <shortName evidence="1">EPSPS</shortName>
    </alternativeName>
</protein>
<proteinExistence type="inferred from homology"/>
<gene>
    <name evidence="1" type="primary">aroA</name>
    <name type="ordered locus">blr0738</name>
</gene>
<evidence type="ECO:0000255" key="1">
    <source>
        <dbReference type="HAMAP-Rule" id="MF_00210"/>
    </source>
</evidence>
<evidence type="ECO:0000256" key="2">
    <source>
        <dbReference type="SAM" id="MobiDB-lite"/>
    </source>
</evidence>
<organism>
    <name type="scientific">Bradyrhizobium diazoefficiens (strain JCM 10833 / BCRC 13528 / IAM 13628 / NBRC 14792 / USDA 110)</name>
    <dbReference type="NCBI Taxonomy" id="224911"/>
    <lineage>
        <taxon>Bacteria</taxon>
        <taxon>Pseudomonadati</taxon>
        <taxon>Pseudomonadota</taxon>
        <taxon>Alphaproteobacteria</taxon>
        <taxon>Hyphomicrobiales</taxon>
        <taxon>Nitrobacteraceae</taxon>
        <taxon>Bradyrhizobium</taxon>
    </lineage>
</organism>
<sequence length="469" mass="48980">MPVTGRGPCGTCAPALRSTSKDTILTHSDQPRPLQSRANGPLTGKVRVPGDKSISHRALILGALAVGETRISGLLEGEDVLNTAKSMQALGASVERTGDFAWKVQGVGVAGFAQPKAALDFGNSGTGCRLVMGAVAGCPISAVFDGDASLRSRPMRRILDPLEKMGARVVSGGEGGRLPLTLQGARDPLPITYKTPVASAQIKSAVLLAGLAAPGTTTVIESEASRDHTELMLKHFGADITSTKEGQHGRRITLVGQPELHGANVVVPADPSSAAFPVVAALIAEGSDVVLSDVMTNPLRTGLFTTLREMGASIEESEVRGDAGEPMAQLRVRASKLRGVEVPPERAPSMIDEYLVLAVAASFAEGTTIMRGLQELRVKESDRLEATAEMLRVNGVKVEVSGDDLVVQGRGHVPGGGTVATHMDHRIAMSALVMGCASDQPVTVDDTAFIATSFPDFIPMMRSLGAEFS</sequence>
<dbReference type="EC" id="2.5.1.19" evidence="1"/>
<dbReference type="EMBL" id="BA000040">
    <property type="protein sequence ID" value="BAC46003.1"/>
    <property type="molecule type" value="Genomic_DNA"/>
</dbReference>
<dbReference type="RefSeq" id="NP_767378.1">
    <property type="nucleotide sequence ID" value="NC_004463.1"/>
</dbReference>
<dbReference type="SMR" id="Q89WF2"/>
<dbReference type="FunCoup" id="Q89WF2">
    <property type="interactions" value="598"/>
</dbReference>
<dbReference type="STRING" id="224911.AAV28_00540"/>
<dbReference type="EnsemblBacteria" id="BAC46003">
    <property type="protein sequence ID" value="BAC46003"/>
    <property type="gene ID" value="BAC46003"/>
</dbReference>
<dbReference type="KEGG" id="bja:blr0738"/>
<dbReference type="PATRIC" id="fig|224911.5.peg.761"/>
<dbReference type="eggNOG" id="COG0128">
    <property type="taxonomic scope" value="Bacteria"/>
</dbReference>
<dbReference type="HOGENOM" id="CLU_024321_0_1_5"/>
<dbReference type="InParanoid" id="Q89WF2"/>
<dbReference type="OrthoDB" id="9809920at2"/>
<dbReference type="PhylomeDB" id="Q89WF2"/>
<dbReference type="UniPathway" id="UPA00053">
    <property type="reaction ID" value="UER00089"/>
</dbReference>
<dbReference type="Proteomes" id="UP000002526">
    <property type="component" value="Chromosome"/>
</dbReference>
<dbReference type="GO" id="GO:0005737">
    <property type="term" value="C:cytoplasm"/>
    <property type="evidence" value="ECO:0007669"/>
    <property type="project" value="UniProtKB-SubCell"/>
</dbReference>
<dbReference type="GO" id="GO:0003866">
    <property type="term" value="F:3-phosphoshikimate 1-carboxyvinyltransferase activity"/>
    <property type="evidence" value="ECO:0000318"/>
    <property type="project" value="GO_Central"/>
</dbReference>
<dbReference type="GO" id="GO:0008652">
    <property type="term" value="P:amino acid biosynthetic process"/>
    <property type="evidence" value="ECO:0007669"/>
    <property type="project" value="UniProtKB-KW"/>
</dbReference>
<dbReference type="GO" id="GO:0009073">
    <property type="term" value="P:aromatic amino acid family biosynthetic process"/>
    <property type="evidence" value="ECO:0007669"/>
    <property type="project" value="UniProtKB-KW"/>
</dbReference>
<dbReference type="GO" id="GO:0009423">
    <property type="term" value="P:chorismate biosynthetic process"/>
    <property type="evidence" value="ECO:0000318"/>
    <property type="project" value="GO_Central"/>
</dbReference>
<dbReference type="CDD" id="cd01556">
    <property type="entry name" value="EPSP_synthase"/>
    <property type="match status" value="1"/>
</dbReference>
<dbReference type="FunFam" id="3.65.10.10:FF:000005">
    <property type="entry name" value="3-phosphoshikimate 1-carboxyvinyltransferase"/>
    <property type="match status" value="1"/>
</dbReference>
<dbReference type="FunFam" id="3.65.10.10:FF:000006">
    <property type="entry name" value="3-phosphoshikimate 1-carboxyvinyltransferase"/>
    <property type="match status" value="1"/>
</dbReference>
<dbReference type="Gene3D" id="3.65.10.10">
    <property type="entry name" value="Enolpyruvate transferase domain"/>
    <property type="match status" value="2"/>
</dbReference>
<dbReference type="HAMAP" id="MF_00210">
    <property type="entry name" value="EPSP_synth"/>
    <property type="match status" value="1"/>
</dbReference>
<dbReference type="InterPro" id="IPR001986">
    <property type="entry name" value="Enolpyruvate_Tfrase_dom"/>
</dbReference>
<dbReference type="InterPro" id="IPR036968">
    <property type="entry name" value="Enolpyruvate_Tfrase_sf"/>
</dbReference>
<dbReference type="InterPro" id="IPR006264">
    <property type="entry name" value="EPSP_synthase"/>
</dbReference>
<dbReference type="InterPro" id="IPR023193">
    <property type="entry name" value="EPSP_synthase_CS"/>
</dbReference>
<dbReference type="InterPro" id="IPR013792">
    <property type="entry name" value="RNA3'P_cycl/enolpyr_Trfase_a/b"/>
</dbReference>
<dbReference type="NCBIfam" id="TIGR01356">
    <property type="entry name" value="aroA"/>
    <property type="match status" value="1"/>
</dbReference>
<dbReference type="PANTHER" id="PTHR21090">
    <property type="entry name" value="AROM/DEHYDROQUINATE SYNTHASE"/>
    <property type="match status" value="1"/>
</dbReference>
<dbReference type="PANTHER" id="PTHR21090:SF5">
    <property type="entry name" value="PENTAFUNCTIONAL AROM POLYPEPTIDE"/>
    <property type="match status" value="1"/>
</dbReference>
<dbReference type="Pfam" id="PF00275">
    <property type="entry name" value="EPSP_synthase"/>
    <property type="match status" value="1"/>
</dbReference>
<dbReference type="PIRSF" id="PIRSF000505">
    <property type="entry name" value="EPSPS"/>
    <property type="match status" value="1"/>
</dbReference>
<dbReference type="SUPFAM" id="SSF55205">
    <property type="entry name" value="EPT/RTPC-like"/>
    <property type="match status" value="1"/>
</dbReference>
<dbReference type="PROSITE" id="PS00104">
    <property type="entry name" value="EPSP_SYNTHASE_1"/>
    <property type="match status" value="1"/>
</dbReference>
<dbReference type="PROSITE" id="PS00885">
    <property type="entry name" value="EPSP_SYNTHASE_2"/>
    <property type="match status" value="1"/>
</dbReference>
<name>AROA_BRADU</name>
<feature type="chain" id="PRO_0000088230" description="3-phosphoshikimate 1-carboxyvinyltransferase">
    <location>
        <begin position="1"/>
        <end position="469"/>
    </location>
</feature>
<feature type="region of interest" description="Disordered" evidence="2">
    <location>
        <begin position="21"/>
        <end position="45"/>
    </location>
</feature>
<feature type="active site" description="Proton acceptor" evidence="1">
    <location>
        <position position="352"/>
    </location>
</feature>
<feature type="binding site" evidence="1">
    <location>
        <position position="52"/>
    </location>
    <ligand>
        <name>3-phosphoshikimate</name>
        <dbReference type="ChEBI" id="CHEBI:145989"/>
    </ligand>
</feature>
<feature type="binding site" evidence="1">
    <location>
        <position position="52"/>
    </location>
    <ligand>
        <name>phosphoenolpyruvate</name>
        <dbReference type="ChEBI" id="CHEBI:58702"/>
    </ligand>
</feature>
<feature type="binding site" evidence="1">
    <location>
        <position position="53"/>
    </location>
    <ligand>
        <name>3-phosphoshikimate</name>
        <dbReference type="ChEBI" id="CHEBI:145989"/>
    </ligand>
</feature>
<feature type="binding site" evidence="1">
    <location>
        <position position="57"/>
    </location>
    <ligand>
        <name>3-phosphoshikimate</name>
        <dbReference type="ChEBI" id="CHEBI:145989"/>
    </ligand>
</feature>
<feature type="binding site" evidence="1">
    <location>
        <position position="125"/>
    </location>
    <ligand>
        <name>phosphoenolpyruvate</name>
        <dbReference type="ChEBI" id="CHEBI:58702"/>
    </ligand>
</feature>
<feature type="binding site" evidence="1">
    <location>
        <position position="153"/>
    </location>
    <ligand>
        <name>phosphoenolpyruvate</name>
        <dbReference type="ChEBI" id="CHEBI:58702"/>
    </ligand>
</feature>
<feature type="binding site" evidence="1">
    <location>
        <position position="199"/>
    </location>
    <ligand>
        <name>3-phosphoshikimate</name>
        <dbReference type="ChEBI" id="CHEBI:145989"/>
    </ligand>
</feature>
<feature type="binding site" evidence="1">
    <location>
        <position position="201"/>
    </location>
    <ligand>
        <name>3-phosphoshikimate</name>
        <dbReference type="ChEBI" id="CHEBI:145989"/>
    </ligand>
</feature>
<feature type="binding site" evidence="1">
    <location>
        <position position="201"/>
    </location>
    <ligand>
        <name>phosphoenolpyruvate</name>
        <dbReference type="ChEBI" id="CHEBI:58702"/>
    </ligand>
</feature>
<feature type="binding site" evidence="1">
    <location>
        <position position="352"/>
    </location>
    <ligand>
        <name>3-phosphoshikimate</name>
        <dbReference type="ChEBI" id="CHEBI:145989"/>
    </ligand>
</feature>
<feature type="binding site" evidence="1">
    <location>
        <position position="379"/>
    </location>
    <ligand>
        <name>3-phosphoshikimate</name>
        <dbReference type="ChEBI" id="CHEBI:145989"/>
    </ligand>
</feature>
<feature type="binding site" evidence="1">
    <location>
        <position position="383"/>
    </location>
    <ligand>
        <name>phosphoenolpyruvate</name>
        <dbReference type="ChEBI" id="CHEBI:58702"/>
    </ligand>
</feature>
<feature type="binding site" evidence="1">
    <location>
        <position position="426"/>
    </location>
    <ligand>
        <name>phosphoenolpyruvate</name>
        <dbReference type="ChEBI" id="CHEBI:58702"/>
    </ligand>
</feature>
<keyword id="KW-0028">Amino-acid biosynthesis</keyword>
<keyword id="KW-0057">Aromatic amino acid biosynthesis</keyword>
<keyword id="KW-0963">Cytoplasm</keyword>
<keyword id="KW-1185">Reference proteome</keyword>
<keyword id="KW-0808">Transferase</keyword>